<accession>Q8ZST3</accession>
<proteinExistence type="inferred from homology"/>
<name>COXX2_PYRAE</name>
<reference key="1">
    <citation type="journal article" date="2002" name="Proc. Natl. Acad. Sci. U.S.A.">
        <title>Genome sequence of the hyperthermophilic crenarchaeon Pyrobaculum aerophilum.</title>
        <authorList>
            <person name="Fitz-Gibbon S.T."/>
            <person name="Ladner H."/>
            <person name="Kim U.-J."/>
            <person name="Stetter K.O."/>
            <person name="Simon M.I."/>
            <person name="Miller J.H."/>
        </authorList>
    </citation>
    <scope>NUCLEOTIDE SEQUENCE [LARGE SCALE GENOMIC DNA]</scope>
    <source>
        <strain>ATCC 51768 / DSM 7523 / JCM 9630 / CIP 104966 / NBRC 100827 / IM2</strain>
    </source>
</reference>
<evidence type="ECO:0000255" key="1">
    <source>
        <dbReference type="HAMAP-Rule" id="MF_00154"/>
    </source>
</evidence>
<evidence type="ECO:0000305" key="2"/>
<comment type="function">
    <text evidence="1">Converts heme B (protoheme IX) to heme O by substitution of the vinyl group on carbon 2 of heme B porphyrin ring with a hydroxyethyl farnesyl side group.</text>
</comment>
<comment type="catalytic activity">
    <reaction evidence="1">
        <text>heme b + (2E,6E)-farnesyl diphosphate + H2O = Fe(II)-heme o + diphosphate</text>
        <dbReference type="Rhea" id="RHEA:28070"/>
        <dbReference type="ChEBI" id="CHEBI:15377"/>
        <dbReference type="ChEBI" id="CHEBI:33019"/>
        <dbReference type="ChEBI" id="CHEBI:60344"/>
        <dbReference type="ChEBI" id="CHEBI:60530"/>
        <dbReference type="ChEBI" id="CHEBI:175763"/>
        <dbReference type="EC" id="2.5.1.141"/>
    </reaction>
</comment>
<comment type="pathway">
    <text evidence="1">Porphyrin-containing compound metabolism; heme O biosynthesis; heme O from protoheme: step 1/1.</text>
</comment>
<comment type="subcellular location">
    <subcellularLocation>
        <location evidence="1">Cell membrane</location>
        <topology evidence="1">Multi-pass membrane protein</topology>
    </subcellularLocation>
</comment>
<comment type="miscellaneous">
    <text evidence="1">Carbon 2 of the heme B porphyrin ring is defined according to the Fischer nomenclature.</text>
</comment>
<comment type="similarity">
    <text evidence="1">Belongs to the UbiA prenyltransferase family. Protoheme IX farnesyltransferase subfamily.</text>
</comment>
<comment type="sequence caution" evidence="2">
    <conflict type="erroneous initiation">
        <sequence resource="EMBL-CDS" id="AAL65030"/>
    </conflict>
</comment>
<keyword id="KW-1003">Cell membrane</keyword>
<keyword id="KW-0350">Heme biosynthesis</keyword>
<keyword id="KW-0472">Membrane</keyword>
<keyword id="KW-1185">Reference proteome</keyword>
<keyword id="KW-0808">Transferase</keyword>
<keyword id="KW-0812">Transmembrane</keyword>
<keyword id="KW-1133">Transmembrane helix</keyword>
<organism>
    <name type="scientific">Pyrobaculum aerophilum (strain ATCC 51768 / DSM 7523 / JCM 9630 / CIP 104966 / NBRC 100827 / IM2)</name>
    <dbReference type="NCBI Taxonomy" id="178306"/>
    <lineage>
        <taxon>Archaea</taxon>
        <taxon>Thermoproteota</taxon>
        <taxon>Thermoprotei</taxon>
        <taxon>Thermoproteales</taxon>
        <taxon>Thermoproteaceae</taxon>
        <taxon>Pyrobaculum</taxon>
    </lineage>
</organism>
<feature type="chain" id="PRO_0000346090" description="Protoheme IX farnesyltransferase 2">
    <location>
        <begin position="1"/>
        <end position="280"/>
    </location>
</feature>
<feature type="transmembrane region" description="Helical" evidence="1">
    <location>
        <begin position="12"/>
        <end position="32"/>
    </location>
</feature>
<feature type="transmembrane region" description="Helical" evidence="1">
    <location>
        <begin position="35"/>
        <end position="55"/>
    </location>
</feature>
<feature type="transmembrane region" description="Helical" evidence="1">
    <location>
        <begin position="76"/>
        <end position="96"/>
    </location>
</feature>
<feature type="transmembrane region" description="Helical" evidence="1">
    <location>
        <begin position="98"/>
        <end position="118"/>
    </location>
</feature>
<feature type="transmembrane region" description="Helical" evidence="1">
    <location>
        <begin position="129"/>
        <end position="149"/>
    </location>
</feature>
<feature type="transmembrane region" description="Helical" evidence="1">
    <location>
        <begin position="158"/>
        <end position="178"/>
    </location>
</feature>
<feature type="transmembrane region" description="Helical" evidence="1">
    <location>
        <begin position="199"/>
        <end position="221"/>
    </location>
</feature>
<feature type="transmembrane region" description="Helical" evidence="1">
    <location>
        <begin position="226"/>
        <end position="248"/>
    </location>
</feature>
<feature type="transmembrane region" description="Helical" evidence="1">
    <location>
        <begin position="255"/>
        <end position="275"/>
    </location>
</feature>
<sequence>MSPYISLLKPRVIWLLILASVAGYIYGGGGVDSRLFSLLAVAFLSTGGSAAFNHYWERDIDALMTRTFKRPLPSGLITPNAALAYSLALSATGISLGFLLLGLLPGLFVLLGWLFYAVVYTIVLKRRTWLNIFGGGFAGNAVFLGGYALAKGTVDLPAVLISFAIYLWTPSHIWALAFKYRGDYKRAGVPMLPALIKEERAVAVISAINAAAAAYILWLYLQFGGGAGGAIVALGVAATIATSIYAAVKKTEEAMWKMYKASSPMLTLFLIALMIQRYRL</sequence>
<dbReference type="EC" id="2.5.1.141" evidence="1"/>
<dbReference type="EMBL" id="AE009441">
    <property type="protein sequence ID" value="AAL65030.1"/>
    <property type="status" value="ALT_INIT"/>
    <property type="molecule type" value="Genomic_DNA"/>
</dbReference>
<dbReference type="RefSeq" id="WP_128621557.1">
    <property type="nucleotide sequence ID" value="NC_003364.1"/>
</dbReference>
<dbReference type="SMR" id="Q8ZST3"/>
<dbReference type="FunCoup" id="Q8ZST3">
    <property type="interactions" value="215"/>
</dbReference>
<dbReference type="STRING" id="178306.PAE3597"/>
<dbReference type="EnsemblBacteria" id="AAL65030">
    <property type="protein sequence ID" value="AAL65030"/>
    <property type="gene ID" value="PAE3597"/>
</dbReference>
<dbReference type="GeneID" id="1466164"/>
<dbReference type="KEGG" id="pai:PAE3597"/>
<dbReference type="PATRIC" id="fig|178306.9.peg.2710"/>
<dbReference type="eggNOG" id="arCOG00479">
    <property type="taxonomic scope" value="Archaea"/>
</dbReference>
<dbReference type="HOGENOM" id="CLU_029631_0_1_2"/>
<dbReference type="InParanoid" id="Q8ZST3"/>
<dbReference type="UniPathway" id="UPA00834">
    <property type="reaction ID" value="UER00712"/>
</dbReference>
<dbReference type="Proteomes" id="UP000002439">
    <property type="component" value="Chromosome"/>
</dbReference>
<dbReference type="GO" id="GO:0005886">
    <property type="term" value="C:plasma membrane"/>
    <property type="evidence" value="ECO:0007669"/>
    <property type="project" value="UniProtKB-SubCell"/>
</dbReference>
<dbReference type="GO" id="GO:0008495">
    <property type="term" value="F:protoheme IX farnesyltransferase activity"/>
    <property type="evidence" value="ECO:0000318"/>
    <property type="project" value="GO_Central"/>
</dbReference>
<dbReference type="GO" id="GO:0006783">
    <property type="term" value="P:heme biosynthetic process"/>
    <property type="evidence" value="ECO:0000318"/>
    <property type="project" value="GO_Central"/>
</dbReference>
<dbReference type="GO" id="GO:0048034">
    <property type="term" value="P:heme O biosynthetic process"/>
    <property type="evidence" value="ECO:0007669"/>
    <property type="project" value="UniProtKB-UniRule"/>
</dbReference>
<dbReference type="CDD" id="cd13957">
    <property type="entry name" value="PT_UbiA_Cox10"/>
    <property type="match status" value="1"/>
</dbReference>
<dbReference type="Gene3D" id="1.10.357.140">
    <property type="entry name" value="UbiA prenyltransferase"/>
    <property type="match status" value="1"/>
</dbReference>
<dbReference type="HAMAP" id="MF_00154">
    <property type="entry name" value="CyoE_CtaB"/>
    <property type="match status" value="1"/>
</dbReference>
<dbReference type="InterPro" id="IPR006369">
    <property type="entry name" value="Protohaem_IX_farnesylTrfase"/>
</dbReference>
<dbReference type="InterPro" id="IPR000537">
    <property type="entry name" value="UbiA_prenyltransferase"/>
</dbReference>
<dbReference type="InterPro" id="IPR030470">
    <property type="entry name" value="UbiA_prenylTrfase_CS"/>
</dbReference>
<dbReference type="InterPro" id="IPR044878">
    <property type="entry name" value="UbiA_sf"/>
</dbReference>
<dbReference type="NCBIfam" id="TIGR01473">
    <property type="entry name" value="cyoE_ctaB"/>
    <property type="match status" value="1"/>
</dbReference>
<dbReference type="PANTHER" id="PTHR43448">
    <property type="entry name" value="PROTOHEME IX FARNESYLTRANSFERASE, MITOCHONDRIAL"/>
    <property type="match status" value="1"/>
</dbReference>
<dbReference type="PANTHER" id="PTHR43448:SF2">
    <property type="entry name" value="PROTOHEME IX FARNESYLTRANSFERASE, MITOCHONDRIAL"/>
    <property type="match status" value="1"/>
</dbReference>
<dbReference type="Pfam" id="PF01040">
    <property type="entry name" value="UbiA"/>
    <property type="match status" value="1"/>
</dbReference>
<dbReference type="PROSITE" id="PS00943">
    <property type="entry name" value="UBIA"/>
    <property type="match status" value="1"/>
</dbReference>
<gene>
    <name evidence="1" type="primary">ctaB2</name>
    <name type="ordered locus">PAE3597</name>
</gene>
<protein>
    <recommendedName>
        <fullName evidence="1">Protoheme IX farnesyltransferase 2</fullName>
        <ecNumber evidence="1">2.5.1.141</ecNumber>
    </recommendedName>
    <alternativeName>
        <fullName evidence="1">Heme B farnesyltransferase 2</fullName>
    </alternativeName>
    <alternativeName>
        <fullName evidence="1">Heme O synthase 2</fullName>
    </alternativeName>
</protein>